<organism>
    <name type="scientific">Mus musculus</name>
    <name type="common">Mouse</name>
    <dbReference type="NCBI Taxonomy" id="10090"/>
    <lineage>
        <taxon>Eukaryota</taxon>
        <taxon>Metazoa</taxon>
        <taxon>Chordata</taxon>
        <taxon>Craniata</taxon>
        <taxon>Vertebrata</taxon>
        <taxon>Euteleostomi</taxon>
        <taxon>Mammalia</taxon>
        <taxon>Eutheria</taxon>
        <taxon>Euarchontoglires</taxon>
        <taxon>Glires</taxon>
        <taxon>Rodentia</taxon>
        <taxon>Myomorpha</taxon>
        <taxon>Muroidea</taxon>
        <taxon>Muridae</taxon>
        <taxon>Murinae</taxon>
        <taxon>Mus</taxon>
        <taxon>Mus</taxon>
    </lineage>
</organism>
<comment type="function">
    <text evidence="2 8">Neuronal phosphoprotein that coats synaptic vesicles, and binds to the cytoskeleton. Acts as a regulator of synaptic vesicles trafficking, involved in the control of neurotransmitter release at the pre-synaptic terminal (By similarity). Also involved in the regulation of axon outgrowth and synaptogenesis (PubMed:7568107). The complex formed with NOS1 and CAPON proteins is necessary for specific nitric-oxide functions at a presynaptic level (By similarity).</text>
</comment>
<comment type="subunit">
    <text evidence="2 4 6">Homodimer (By similarity). Can form oligomers with SYN2 (By similarity). Interacts with CAPON (By similarity). Forms a ternary complex with NOS1 (By similarity). Isoform Ib interacts with PRNP (PubMed:11571277).</text>
</comment>
<comment type="subcellular location">
    <subcellularLocation>
        <location evidence="6">Synapse</location>
    </subcellularLocation>
    <subcellularLocation>
        <location evidence="6">Golgi apparatus</location>
    </subcellularLocation>
    <subcellularLocation>
        <location evidence="2">Presynapse</location>
    </subcellularLocation>
    <subcellularLocation>
        <location evidence="2">Cytoplasmic vesicle</location>
        <location evidence="2">Secretory vesicle</location>
        <location evidence="2">Synaptic vesicle</location>
    </subcellularLocation>
    <text evidence="2">Dissociates from synaptic vesicles and redistributes into the axon during action potential firing, in a step that precedes fusion of vesicles with the plasma membrane. Reclusters to presynapses after the cessation of synaptic activity.</text>
</comment>
<comment type="alternative products">
    <event type="alternative splicing"/>
    <isoform>
        <id>O88935-2</id>
        <name>Ia</name>
        <sequence type="displayed"/>
    </isoform>
    <isoform>
        <id>O88935-1</id>
        <name>Ib</name>
        <sequence type="described" ref="VSP_015206 VSP_015207"/>
    </isoform>
    <isoform>
        <id>O88935-3</id>
        <name>3</name>
        <sequence type="described" ref="VSP_015205"/>
    </isoform>
</comment>
<comment type="domain">
    <text evidence="1">The A region binds phospholipids with a preference for negatively charged species.</text>
</comment>
<comment type="PTM">
    <text evidence="2">Substrate of different protein kinases. Phosphorylation, including phosphorylation at Ser-9, promotes synapsin-1 dissociation from synaptic vesicles, regulates its rate of dispersion, and controls the kinetics of vesicle pool turnover.</text>
</comment>
<comment type="similarity">
    <text evidence="11">Belongs to the synapsin family.</text>
</comment>
<keyword id="KW-0009">Actin-binding</keyword>
<keyword id="KW-0025">Alternative splicing</keyword>
<keyword id="KW-0966">Cell projection</keyword>
<keyword id="KW-0968">Cytoplasmic vesicle</keyword>
<keyword id="KW-0903">Direct protein sequencing</keyword>
<keyword id="KW-0325">Glycoprotein</keyword>
<keyword id="KW-0333">Golgi apparatus</keyword>
<keyword id="KW-0488">Methylation</keyword>
<keyword id="KW-0597">Phosphoprotein</keyword>
<keyword id="KW-1185">Reference proteome</keyword>
<keyword id="KW-0677">Repeat</keyword>
<keyword id="KW-0770">Synapse</keyword>
<gene>
    <name type="primary">Syn1</name>
    <name type="synonym">Syn-1</name>
</gene>
<name>SYN1_MOUSE</name>
<dbReference type="EMBL" id="AF085809">
    <property type="protein sequence ID" value="AAD09833.1"/>
    <property type="molecule type" value="mRNA"/>
</dbReference>
<dbReference type="EMBL" id="BC022954">
    <property type="protein sequence ID" value="AAH22954.1"/>
    <property type="molecule type" value="mRNA"/>
</dbReference>
<dbReference type="EMBL" id="L32025">
    <property type="protein sequence ID" value="AAA79963.1"/>
    <property type="molecule type" value="Genomic_DNA"/>
</dbReference>
<dbReference type="CCDS" id="CCDS53017.1">
    <molecule id="O88935-2"/>
</dbReference>
<dbReference type="CCDS" id="CCDS53018.1">
    <molecule id="O88935-1"/>
</dbReference>
<dbReference type="PIR" id="A53692">
    <property type="entry name" value="A53692"/>
</dbReference>
<dbReference type="RefSeq" id="NP_001104250.1">
    <molecule id="O88935-1"/>
    <property type="nucleotide sequence ID" value="NM_001110780.1"/>
</dbReference>
<dbReference type="RefSeq" id="NP_038708.3">
    <molecule id="O88935-2"/>
    <property type="nucleotide sequence ID" value="NM_013680.4"/>
</dbReference>
<dbReference type="SMR" id="O88935"/>
<dbReference type="BioGRID" id="203600">
    <property type="interactions" value="38"/>
</dbReference>
<dbReference type="CORUM" id="O88935"/>
<dbReference type="FunCoup" id="O88935">
    <property type="interactions" value="625"/>
</dbReference>
<dbReference type="IntAct" id="O88935">
    <property type="interactions" value="14"/>
</dbReference>
<dbReference type="MINT" id="O88935"/>
<dbReference type="STRING" id="10090.ENSMUSP00000080568"/>
<dbReference type="GlyCosmos" id="O88935">
    <property type="glycosylation" value="11 sites, No reported glycans"/>
</dbReference>
<dbReference type="GlyGen" id="O88935">
    <property type="glycosylation" value="28 sites, 1 O-linked glycan (22 sites)"/>
</dbReference>
<dbReference type="iPTMnet" id="O88935"/>
<dbReference type="PhosphoSitePlus" id="O88935"/>
<dbReference type="SwissPalm" id="O88935"/>
<dbReference type="PaxDb" id="10090-ENSMUSP00000111002"/>
<dbReference type="PeptideAtlas" id="O88935"/>
<dbReference type="ProteomicsDB" id="254840">
    <molecule id="O88935-2"/>
</dbReference>
<dbReference type="ProteomicsDB" id="254841">
    <molecule id="O88935-1"/>
</dbReference>
<dbReference type="ProteomicsDB" id="254842">
    <molecule id="O88935-3"/>
</dbReference>
<dbReference type="Pumba" id="O88935"/>
<dbReference type="ABCD" id="O88935">
    <property type="antibodies" value="1 sequenced antibody"/>
</dbReference>
<dbReference type="Antibodypedia" id="403">
    <property type="antibodies" value="1092 antibodies from 45 providers"/>
</dbReference>
<dbReference type="DNASU" id="20964"/>
<dbReference type="Ensembl" id="ENSMUST00000081893.7">
    <molecule id="O88935-2"/>
    <property type="protein sequence ID" value="ENSMUSP00000080568.7"/>
    <property type="gene ID" value="ENSMUSG00000037217.16"/>
</dbReference>
<dbReference type="Ensembl" id="ENSMUST00000115345.8">
    <molecule id="O88935-1"/>
    <property type="protein sequence ID" value="ENSMUSP00000111002.2"/>
    <property type="gene ID" value="ENSMUSG00000037217.16"/>
</dbReference>
<dbReference type="GeneID" id="20964"/>
<dbReference type="KEGG" id="mmu:20964"/>
<dbReference type="UCSC" id="uc009stw.2">
    <molecule id="O88935-2"/>
    <property type="organism name" value="mouse"/>
</dbReference>
<dbReference type="UCSC" id="uc009stx.2">
    <molecule id="O88935-1"/>
    <property type="organism name" value="mouse"/>
</dbReference>
<dbReference type="AGR" id="MGI:98460"/>
<dbReference type="CTD" id="6853"/>
<dbReference type="MGI" id="MGI:98460">
    <property type="gene designation" value="Syn1"/>
</dbReference>
<dbReference type="VEuPathDB" id="HostDB:ENSMUSG00000037217"/>
<dbReference type="eggNOG" id="KOG3895">
    <property type="taxonomic scope" value="Eukaryota"/>
</dbReference>
<dbReference type="GeneTree" id="ENSGT00940000161978"/>
<dbReference type="HOGENOM" id="CLU_010582_3_0_1"/>
<dbReference type="InParanoid" id="O88935"/>
<dbReference type="OMA" id="MSDKYKM"/>
<dbReference type="OrthoDB" id="10249572at2759"/>
<dbReference type="PhylomeDB" id="O88935"/>
<dbReference type="TreeFam" id="TF319919"/>
<dbReference type="Reactome" id="R-MMU-181429">
    <property type="pathway name" value="Serotonin Neurotransmitter Release Cycle"/>
</dbReference>
<dbReference type="Reactome" id="R-MMU-212676">
    <property type="pathway name" value="Dopamine Neurotransmitter Release Cycle"/>
</dbReference>
<dbReference type="BioGRID-ORCS" id="20964">
    <property type="hits" value="0 hits in 79 CRISPR screens"/>
</dbReference>
<dbReference type="CD-CODE" id="05A797AF">
    <property type="entry name" value="Presynaptic clusters"/>
</dbReference>
<dbReference type="CD-CODE" id="CE726F99">
    <property type="entry name" value="Postsynaptic density"/>
</dbReference>
<dbReference type="ChiTaRS" id="Syn1">
    <property type="organism name" value="mouse"/>
</dbReference>
<dbReference type="PRO" id="PR:O88935"/>
<dbReference type="Proteomes" id="UP000000589">
    <property type="component" value="Chromosome X"/>
</dbReference>
<dbReference type="RNAct" id="O88935">
    <property type="molecule type" value="protein"/>
</dbReference>
<dbReference type="Bgee" id="ENSMUSG00000037217">
    <property type="expression patterns" value="Expressed in primary visual cortex and 119 other cell types or tissues"/>
</dbReference>
<dbReference type="GO" id="GO:0030424">
    <property type="term" value="C:axon"/>
    <property type="evidence" value="ECO:0000314"/>
    <property type="project" value="MGI"/>
</dbReference>
<dbReference type="GO" id="GO:0044297">
    <property type="term" value="C:cell body"/>
    <property type="evidence" value="ECO:0000314"/>
    <property type="project" value="MGI"/>
</dbReference>
<dbReference type="GO" id="GO:0060203">
    <property type="term" value="C:clathrin-sculpted glutamate transport vesicle membrane"/>
    <property type="evidence" value="ECO:0000304"/>
    <property type="project" value="Reactome"/>
</dbReference>
<dbReference type="GO" id="GO:0005856">
    <property type="term" value="C:cytoskeleton"/>
    <property type="evidence" value="ECO:0007669"/>
    <property type="project" value="Ensembl"/>
</dbReference>
<dbReference type="GO" id="GO:0030425">
    <property type="term" value="C:dendrite"/>
    <property type="evidence" value="ECO:0000314"/>
    <property type="project" value="MGI"/>
</dbReference>
<dbReference type="GO" id="GO:0098850">
    <property type="term" value="C:extrinsic component of synaptic vesicle membrane"/>
    <property type="evidence" value="ECO:0007669"/>
    <property type="project" value="Ensembl"/>
</dbReference>
<dbReference type="GO" id="GO:0005794">
    <property type="term" value="C:Golgi apparatus"/>
    <property type="evidence" value="ECO:0007669"/>
    <property type="project" value="UniProtKB-SubCell"/>
</dbReference>
<dbReference type="GO" id="GO:0043209">
    <property type="term" value="C:myelin sheath"/>
    <property type="evidence" value="ECO:0007005"/>
    <property type="project" value="UniProtKB"/>
</dbReference>
<dbReference type="GO" id="GO:0014069">
    <property type="term" value="C:postsynaptic density"/>
    <property type="evidence" value="ECO:0000314"/>
    <property type="project" value="MGI"/>
</dbReference>
<dbReference type="GO" id="GO:0098793">
    <property type="term" value="C:presynapse"/>
    <property type="evidence" value="ECO:0000314"/>
    <property type="project" value="MGI"/>
</dbReference>
<dbReference type="GO" id="GO:0048786">
    <property type="term" value="C:presynaptic active zone"/>
    <property type="evidence" value="ECO:0000314"/>
    <property type="project" value="MGI"/>
</dbReference>
<dbReference type="GO" id="GO:0098685">
    <property type="term" value="C:Schaffer collateral - CA1 synapse"/>
    <property type="evidence" value="ECO:0000314"/>
    <property type="project" value="SynGO"/>
</dbReference>
<dbReference type="GO" id="GO:0045202">
    <property type="term" value="C:synapse"/>
    <property type="evidence" value="ECO:0000314"/>
    <property type="project" value="MGI"/>
</dbReference>
<dbReference type="GO" id="GO:0030672">
    <property type="term" value="C:synaptic vesicle membrane"/>
    <property type="evidence" value="ECO:0000314"/>
    <property type="project" value="MGI"/>
</dbReference>
<dbReference type="GO" id="GO:0000795">
    <property type="term" value="C:synaptonemal complex"/>
    <property type="evidence" value="ECO:0000314"/>
    <property type="project" value="MGI"/>
</dbReference>
<dbReference type="GO" id="GO:0003779">
    <property type="term" value="F:actin binding"/>
    <property type="evidence" value="ECO:0007669"/>
    <property type="project" value="UniProtKB-KW"/>
</dbReference>
<dbReference type="GO" id="GO:0005524">
    <property type="term" value="F:ATP binding"/>
    <property type="evidence" value="ECO:0007669"/>
    <property type="project" value="InterPro"/>
</dbReference>
<dbReference type="GO" id="GO:0048306">
    <property type="term" value="F:calcium-dependent protein binding"/>
    <property type="evidence" value="ECO:0007669"/>
    <property type="project" value="Ensembl"/>
</dbReference>
<dbReference type="GO" id="GO:0042802">
    <property type="term" value="F:identical protein binding"/>
    <property type="evidence" value="ECO:0000353"/>
    <property type="project" value="MGI"/>
</dbReference>
<dbReference type="GO" id="GO:0019901">
    <property type="term" value="F:protein kinase binding"/>
    <property type="evidence" value="ECO:0000353"/>
    <property type="project" value="ParkinsonsUK-UCL"/>
</dbReference>
<dbReference type="GO" id="GO:0048666">
    <property type="term" value="P:neuron development"/>
    <property type="evidence" value="ECO:0007669"/>
    <property type="project" value="Ensembl"/>
</dbReference>
<dbReference type="GO" id="GO:0007269">
    <property type="term" value="P:neurotransmitter secretion"/>
    <property type="evidence" value="ECO:0000315"/>
    <property type="project" value="MGI"/>
</dbReference>
<dbReference type="GO" id="GO:0048172">
    <property type="term" value="P:regulation of short-term neuronal synaptic plasticity"/>
    <property type="evidence" value="ECO:0000304"/>
    <property type="project" value="ParkinsonsUK-UCL"/>
</dbReference>
<dbReference type="GO" id="GO:0098693">
    <property type="term" value="P:regulation of synaptic vesicle cycle"/>
    <property type="evidence" value="ECO:0000314"/>
    <property type="project" value="SynGO"/>
</dbReference>
<dbReference type="GO" id="GO:2000300">
    <property type="term" value="P:regulation of synaptic vesicle exocytosis"/>
    <property type="evidence" value="ECO:0007669"/>
    <property type="project" value="Ensembl"/>
</dbReference>
<dbReference type="GO" id="GO:0050808">
    <property type="term" value="P:synapse organization"/>
    <property type="evidence" value="ECO:0007669"/>
    <property type="project" value="Ensembl"/>
</dbReference>
<dbReference type="GO" id="GO:0099504">
    <property type="term" value="P:synaptic vesicle cycle"/>
    <property type="evidence" value="ECO:0000314"/>
    <property type="project" value="SynGO"/>
</dbReference>
<dbReference type="FunFam" id="3.30.1490.20:FF:000008">
    <property type="entry name" value="Synapsin I"/>
    <property type="match status" value="1"/>
</dbReference>
<dbReference type="FunFam" id="3.30.470.20:FF:000042">
    <property type="entry name" value="Synapsin III"/>
    <property type="match status" value="1"/>
</dbReference>
<dbReference type="FunFam" id="3.40.50.20:FF:000008">
    <property type="entry name" value="Synapsin III"/>
    <property type="match status" value="1"/>
</dbReference>
<dbReference type="Gene3D" id="3.40.50.20">
    <property type="match status" value="1"/>
</dbReference>
<dbReference type="Gene3D" id="3.30.1490.20">
    <property type="entry name" value="ATP-grasp fold, A domain"/>
    <property type="match status" value="1"/>
</dbReference>
<dbReference type="Gene3D" id="3.30.470.20">
    <property type="entry name" value="ATP-grasp fold, B domain"/>
    <property type="match status" value="1"/>
</dbReference>
<dbReference type="InterPro" id="IPR013815">
    <property type="entry name" value="ATP_grasp_subdomain_1"/>
</dbReference>
<dbReference type="InterPro" id="IPR016185">
    <property type="entry name" value="PreATP-grasp_dom_sf"/>
</dbReference>
<dbReference type="InterPro" id="IPR001359">
    <property type="entry name" value="Synapsin"/>
</dbReference>
<dbReference type="InterPro" id="IPR020898">
    <property type="entry name" value="Synapsin_ATP-bd_dom"/>
</dbReference>
<dbReference type="InterPro" id="IPR019735">
    <property type="entry name" value="Synapsin_CS"/>
</dbReference>
<dbReference type="InterPro" id="IPR019736">
    <property type="entry name" value="Synapsin_P_site"/>
</dbReference>
<dbReference type="InterPro" id="IPR020897">
    <property type="entry name" value="Synapsin_pre-ATP-grasp_dom"/>
</dbReference>
<dbReference type="PANTHER" id="PTHR10841">
    <property type="entry name" value="SYNAPSIN"/>
    <property type="match status" value="1"/>
</dbReference>
<dbReference type="PANTHER" id="PTHR10841:SF24">
    <property type="entry name" value="SYNAPSIN-1"/>
    <property type="match status" value="1"/>
</dbReference>
<dbReference type="Pfam" id="PF02078">
    <property type="entry name" value="Synapsin"/>
    <property type="match status" value="1"/>
</dbReference>
<dbReference type="Pfam" id="PF02750">
    <property type="entry name" value="Synapsin_C"/>
    <property type="match status" value="1"/>
</dbReference>
<dbReference type="Pfam" id="PF10581">
    <property type="entry name" value="Synapsin_N"/>
    <property type="match status" value="1"/>
</dbReference>
<dbReference type="PRINTS" id="PR01368">
    <property type="entry name" value="SYNAPSIN"/>
</dbReference>
<dbReference type="SUPFAM" id="SSF56059">
    <property type="entry name" value="Glutathione synthetase ATP-binding domain-like"/>
    <property type="match status" value="1"/>
</dbReference>
<dbReference type="SUPFAM" id="SSF52440">
    <property type="entry name" value="PreATP-grasp domain"/>
    <property type="match status" value="1"/>
</dbReference>
<dbReference type="PROSITE" id="PS00415">
    <property type="entry name" value="SYNAPSIN_1"/>
    <property type="match status" value="1"/>
</dbReference>
<dbReference type="PROSITE" id="PS00416">
    <property type="entry name" value="SYNAPSIN_2"/>
    <property type="match status" value="1"/>
</dbReference>
<proteinExistence type="evidence at protein level"/>
<accession>O88935</accession>
<accession>Q62279</accession>
<accession>Q8QZT8</accession>
<feature type="chain" id="PRO_0000183019" description="Synapsin-1">
    <location>
        <begin position="1"/>
        <end position="706"/>
    </location>
</feature>
<feature type="region of interest" description="A">
    <location>
        <begin position="1"/>
        <end position="28"/>
    </location>
</feature>
<feature type="region of interest" description="Disordered" evidence="5">
    <location>
        <begin position="13"/>
        <end position="72"/>
    </location>
</feature>
<feature type="region of interest" description="B; linker">
    <location>
        <begin position="29"/>
        <end position="112"/>
    </location>
</feature>
<feature type="region of interest" description="C; actin-binding and synaptic-vesicle binding">
    <location>
        <begin position="113"/>
        <end position="420"/>
    </location>
</feature>
<feature type="region of interest" description="Disordered" evidence="5">
    <location>
        <begin position="419"/>
        <end position="690"/>
    </location>
</feature>
<feature type="region of interest" description="D; Pro-rich linker">
    <location>
        <begin position="421"/>
        <end position="657"/>
    </location>
</feature>
<feature type="region of interest" description="E">
    <location>
        <begin position="658"/>
        <end position="706"/>
    </location>
</feature>
<feature type="compositionally biased region" description="Pro residues" evidence="5">
    <location>
        <begin position="28"/>
        <end position="37"/>
    </location>
</feature>
<feature type="compositionally biased region" description="Low complexity" evidence="5">
    <location>
        <begin position="38"/>
        <end position="69"/>
    </location>
</feature>
<feature type="compositionally biased region" description="Low complexity" evidence="5">
    <location>
        <begin position="428"/>
        <end position="440"/>
    </location>
</feature>
<feature type="compositionally biased region" description="Pro residues" evidence="5">
    <location>
        <begin position="453"/>
        <end position="473"/>
    </location>
</feature>
<feature type="compositionally biased region" description="Low complexity" evidence="5">
    <location>
        <begin position="489"/>
        <end position="499"/>
    </location>
</feature>
<feature type="compositionally biased region" description="Low complexity" evidence="5">
    <location>
        <begin position="509"/>
        <end position="524"/>
    </location>
</feature>
<feature type="compositionally biased region" description="Pro residues" evidence="5">
    <location>
        <begin position="541"/>
        <end position="552"/>
    </location>
</feature>
<feature type="compositionally biased region" description="Low complexity" evidence="5">
    <location>
        <begin position="553"/>
        <end position="563"/>
    </location>
</feature>
<feature type="compositionally biased region" description="Low complexity" evidence="5">
    <location>
        <begin position="579"/>
        <end position="590"/>
    </location>
</feature>
<feature type="compositionally biased region" description="Polar residues" evidence="5">
    <location>
        <begin position="661"/>
        <end position="671"/>
    </location>
</feature>
<feature type="modified residue" description="Phosphoserine" evidence="14">
    <location>
        <position position="9"/>
    </location>
</feature>
<feature type="modified residue" description="Phosphoserine" evidence="14">
    <location>
        <position position="39"/>
    </location>
</feature>
<feature type="modified residue" description="Phosphoserine" evidence="2">
    <location>
        <position position="62"/>
    </location>
</feature>
<feature type="modified residue" description="Phosphoserine" evidence="2">
    <location>
        <position position="67"/>
    </location>
</feature>
<feature type="modified residue" description="Phosphotyrosine" evidence="13">
    <location>
        <position position="312"/>
    </location>
</feature>
<feature type="modified residue" description="Phosphoserine" evidence="12 14">
    <location>
        <position position="427"/>
    </location>
</feature>
<feature type="modified residue" description="Omega-N-methylarginine" evidence="15">
    <location>
        <position position="430"/>
    </location>
</feature>
<feature type="modified residue" description="Phosphoserine; alternate" evidence="14">
    <location>
        <position position="432"/>
    </location>
</feature>
<feature type="modified residue" description="Phosphoserine" evidence="14">
    <location>
        <position position="434"/>
    </location>
</feature>
<feature type="modified residue" description="Phosphoserine" evidence="14">
    <location>
        <position position="437"/>
    </location>
</feature>
<feature type="modified residue" description="Phosphoserine" evidence="14">
    <location>
        <position position="438"/>
    </location>
</feature>
<feature type="modified residue" description="Omega-N-methylarginine" evidence="15">
    <location>
        <position position="476"/>
    </location>
</feature>
<feature type="modified residue" description="Omega-N-methylarginine" evidence="15">
    <location>
        <position position="534"/>
    </location>
</feature>
<feature type="modified residue" description="Omega-N-methylarginine" evidence="15">
    <location>
        <position position="547"/>
    </location>
</feature>
<feature type="modified residue" description="Phosphoserine; by PDPK1" evidence="3">
    <location>
        <position position="551"/>
    </location>
</feature>
<feature type="modified residue" description="Phosphoserine" evidence="4">
    <location>
        <position position="553"/>
    </location>
</feature>
<feature type="modified residue" description="Omega-N-methylarginine" evidence="15">
    <location>
        <position position="556"/>
    </location>
</feature>
<feature type="modified residue" description="Phosphoserine; by CaMK2" evidence="3">
    <location>
        <position position="568"/>
    </location>
</feature>
<feature type="modified residue" description="Phosphoserine; by CaMK2" evidence="3">
    <location>
        <position position="605"/>
    </location>
</feature>
<feature type="modified residue" description="Omega-N-methylarginine" evidence="15">
    <location>
        <position position="622"/>
    </location>
</feature>
<feature type="modified residue" description="Phosphoserine" evidence="14">
    <location>
        <position position="664"/>
    </location>
</feature>
<feature type="modified residue" description="Phosphoserine" evidence="14">
    <location>
        <position position="666"/>
    </location>
</feature>
<feature type="modified residue" description="Asymmetric dimethylarginine" evidence="15">
    <location>
        <position position="680"/>
    </location>
</feature>
<feature type="modified residue" description="Phosphoserine" evidence="14">
    <location>
        <position position="684"/>
    </location>
</feature>
<feature type="glycosylation site" description="O-linked (GlcNAc) serine" evidence="1">
    <location>
        <position position="55"/>
    </location>
</feature>
<feature type="glycosylation site" description="O-linked (GlcNAc) threonine" evidence="1">
    <location>
        <position position="56"/>
    </location>
</feature>
<feature type="glycosylation site" description="O-linked (GlcNAc) threonine" evidence="7">
    <location>
        <position position="87"/>
    </location>
</feature>
<feature type="glycosylation site" description="O-linked (GlcNAc) serine" evidence="1">
    <location>
        <position position="96"/>
    </location>
</feature>
<feature type="glycosylation site" description="O-linked (GlcNAc) serine" evidence="1">
    <location>
        <position position="103"/>
    </location>
</feature>
<feature type="glycosylation site" description="O-linked (GlcNAc) serine" evidence="1">
    <location>
        <position position="261"/>
    </location>
</feature>
<feature type="glycosylation site" description="O-linked (GlcNAc) serine; alternate" evidence="1">
    <location>
        <position position="432"/>
    </location>
</feature>
<feature type="glycosylation site" description="O-linked (GlcNAc) serine" evidence="1">
    <location>
        <position position="518"/>
    </location>
</feature>
<feature type="glycosylation site" description="O-linked (GlcNAc) threonine" evidence="7">
    <location>
        <position position="526"/>
    </location>
</feature>
<feature type="glycosylation site" description="O-linked (GlcNAc) threonine" evidence="1">
    <location>
        <position position="564"/>
    </location>
</feature>
<feature type="glycosylation site" description="O-linked (GlcNAc) serine" evidence="1">
    <location>
        <position position="578"/>
    </location>
</feature>
<feature type="splice variant" id="VSP_015205" description="In isoform 3." evidence="9">
    <location>
        <begin position="573"/>
        <end position="600"/>
    </location>
</feature>
<feature type="splice variant" id="VSP_015206" description="In isoform Ib." evidence="10">
    <original>NKSQSLTNA</original>
    <variation>KASPSQAQP</variation>
    <location>
        <begin position="662"/>
        <end position="670"/>
    </location>
</feature>
<feature type="splice variant" id="VSP_015207" description="In isoform Ib." evidence="10">
    <location>
        <begin position="671"/>
        <end position="706"/>
    </location>
</feature>
<feature type="sequence conflict" description="In Ref. 3; AAA79963." evidence="11" ref="3">
    <original>P</original>
    <variation>L</variation>
    <location>
        <position position="44"/>
    </location>
</feature>
<protein>
    <recommendedName>
        <fullName>Synapsin-1</fullName>
    </recommendedName>
    <alternativeName>
        <fullName>Synapsin I</fullName>
    </alternativeName>
</protein>
<sequence>MNYLRRRLSDSNFMANLPNGYMTDLQRPQPPPPPPSAASPGATPGSATASAERASTAAPVASPAAPSPGSSGGGGFFSSLSNAVKQTTAAAAATFSEQVGGGSGGAGRGGAAARVLLVIDEPHTDWAKYFKGKKIHGEIDIKVEQAEFSDLNLVAHANGGFSVDMEVLRNGVKVVRSLKPDFVLIRQHAFSMARNGDYRSLVIGLQYAGIPSVNSLHSVYNFCDKPWVFAQMVRLHKKLGTEEFPLIDQTFYPNHKEMLSSTTYPVVVKMGHAHSGMGKVKVDNQHDFQDIASVVALTKTYATAEPFIDAKYDVRVQKIGQNYKAYMRTSVSGNWKTNTGSAMLEQIAMSDRYKLWVDTCSEIFGGLDICAVEALHGKDGRDHIIEVVGSSMPLIGDHQDEDKQLIVELVVNKMTQALPRQPQRDASPGRGSHSQSSSPGALTLGRQTSQQPAGPPAQQRPPPQGGPPQPGPGPQRQGPPLQQRPPPQGQQHLSGLGPPAGSPLPQRLPSPTAAPQQSASQATPVTQGQGRQSRPVAGGPGAPPAARPPASPSPQRQAGAPQATRQASISGPAPTKASGAPPGGQQRQGPPQKPPGPAGPTRQASQAGPGPRTGPPTTQQPRPSGPGPAGRPAKPQLAQKPSQDVPPPITAAAGGPPHPQLNKSQSLTNAFNLPEPAPPRPSLSQDEVKAETIRSLRKSFASLFSD</sequence>
<reference key="1">
    <citation type="journal article" date="1999" name="J. Biol. Chem.">
        <title>Cloning from insulinoma cells of synapsin I associated with insulin secretory granules.</title>
        <authorList>
            <person name="Matsumoto K."/>
            <person name="Ebihara K."/>
            <person name="Yamamoto H."/>
            <person name="Tabuchi H."/>
            <person name="Fukunaga K."/>
            <person name="Yasunami M."/>
            <person name="Ohkubo H."/>
            <person name="Shichiri M."/>
            <person name="Miyamoto E."/>
        </authorList>
    </citation>
    <scope>NUCLEOTIDE SEQUENCE [MRNA] (ISOFORM IB)</scope>
    <source>
        <strain>C57BL/6J</strain>
        <tissue>Pancreatic islet</tissue>
    </source>
</reference>
<reference key="2">
    <citation type="journal article" date="2004" name="Genome Res.">
        <title>The status, quality, and expansion of the NIH full-length cDNA project: the Mammalian Gene Collection (MGC).</title>
        <authorList>
            <consortium name="The MGC Project Team"/>
        </authorList>
    </citation>
    <scope>NUCLEOTIDE SEQUENCE [LARGE SCALE MRNA] (ISOFORM 3)</scope>
    <source>
        <tissue>Eye</tissue>
    </source>
</reference>
<reference key="3">
    <citation type="journal article" date="1994" name="J. Biol. Chem.">
        <title>Neuron-specific expression of the synapsin II gene is directed by a specific core promoter and upstream regulatory elements.</title>
        <authorList>
            <person name="Chin L.S."/>
            <person name="Li L."/>
            <person name="Greengard P."/>
        </authorList>
    </citation>
    <scope>NUCLEOTIDE SEQUENCE [GENOMIC DNA] OF 1-125</scope>
</reference>
<reference key="4">
    <citation type="submission" date="2009-01" db="UniProtKB">
        <authorList>
            <person name="Lubec G."/>
            <person name="Kang S.U."/>
            <person name="Sunyer B."/>
            <person name="Chen W.-Q."/>
        </authorList>
    </citation>
    <scope>PROTEIN SEQUENCE OF 86-108; 115-128; 177-186; 257-269; 282-311; 329-336; 414-420; 431-446 AND 566-576</scope>
    <scope>IDENTIFICATION BY MASS SPECTROMETRY</scope>
    <source>
        <strain>C57BL/6J</strain>
        <strain>OF1</strain>
        <tissue>Brain</tissue>
        <tissue>Hippocampus</tissue>
    </source>
</reference>
<reference key="5">
    <citation type="journal article" date="1995" name="Proc. Natl. Acad. Sci. U.S.A.">
        <title>Impairment of axonal development and of synaptogenesis in hippocampal neurons of synapsin I-deficient mice.</title>
        <authorList>
            <person name="Chin L.S."/>
            <person name="Li L."/>
            <person name="Ferreira A."/>
            <person name="Kosik K.S."/>
            <person name="Greengard P."/>
        </authorList>
    </citation>
    <scope>FUNCTION</scope>
</reference>
<reference key="6">
    <citation type="journal article" date="2001" name="J. Biol. Chem.">
        <title>PrPC directly interacts with proteins involved in signaling pathways.</title>
        <authorList>
            <person name="Spielhaupter C."/>
            <person name="Schaetzl H.M."/>
        </authorList>
    </citation>
    <scope>SUBCELLULAR LOCATION</scope>
    <scope>INTERACTION WITH PRNP</scope>
</reference>
<reference key="7">
    <citation type="journal article" date="2004" name="Mol. Cell. Proteomics">
        <title>Phosphoproteomic analysis of the developing mouse brain.</title>
        <authorList>
            <person name="Ballif B.A."/>
            <person name="Villen J."/>
            <person name="Beausoleil S.A."/>
            <person name="Schwartz D."/>
            <person name="Gygi S.P."/>
        </authorList>
    </citation>
    <scope>IDENTIFICATION BY MASS SPECTROMETRY [LARGE SCALE ANALYSIS]</scope>
    <source>
        <tissue>Embryonic brain</tissue>
    </source>
</reference>
<reference key="8">
    <citation type="journal article" date="2006" name="Mol. Cell. Proteomics">
        <title>Comprehensive identification of phosphorylation sites in postsynaptic density preparations.</title>
        <authorList>
            <person name="Trinidad J.C."/>
            <person name="Specht C.G."/>
            <person name="Thalhammer A."/>
            <person name="Schoepfer R."/>
            <person name="Burlingame A.L."/>
        </authorList>
    </citation>
    <scope>PHOSPHORYLATION [LARGE SCALE ANALYSIS] AT SER-427</scope>
    <scope>IDENTIFICATION BY MASS SPECTROMETRY [LARGE SCALE ANALYSIS]</scope>
    <source>
        <tissue>Brain</tissue>
    </source>
</reference>
<reference key="9">
    <citation type="journal article" date="2006" name="Mol. Cell. Proteomics">
        <title>O-linked N-acetylglucosamine proteomics of postsynaptic density preparations using lectin weak affinity chromatography and mass spectrometry.</title>
        <authorList>
            <person name="Vosseller K."/>
            <person name="Trinidad J.C."/>
            <person name="Chalkley R.J."/>
            <person name="Specht C.G."/>
            <person name="Thalhammer A."/>
            <person name="Lynn A.J."/>
            <person name="Snedecor J.O."/>
            <person name="Guan S."/>
            <person name="Medzihradszky K.F."/>
            <person name="Maltby D.A."/>
            <person name="Schoepfer R."/>
            <person name="Burlingame A.L."/>
        </authorList>
    </citation>
    <scope>GLYCOSYLATION [LARGE SCALE ANALYSIS] AT THR-87 AND THR-526</scope>
    <source>
        <tissue>Brain</tissue>
    </source>
</reference>
<reference key="10">
    <citation type="journal article" date="2008" name="J. Proteome Res.">
        <title>Large-scale identification and evolution indexing of tyrosine phosphorylation sites from murine brain.</title>
        <authorList>
            <person name="Ballif B.A."/>
            <person name="Carey G.R."/>
            <person name="Sunyaev S.R."/>
            <person name="Gygi S.P."/>
        </authorList>
    </citation>
    <scope>PHOSPHORYLATION [LARGE SCALE ANALYSIS] AT TYR-312</scope>
    <scope>IDENTIFICATION BY MASS SPECTROMETRY [LARGE SCALE ANALYSIS]</scope>
    <source>
        <tissue>Brain</tissue>
    </source>
</reference>
<reference key="11">
    <citation type="journal article" date="2010" name="Cell">
        <title>A tissue-specific atlas of mouse protein phosphorylation and expression.</title>
        <authorList>
            <person name="Huttlin E.L."/>
            <person name="Jedrychowski M.P."/>
            <person name="Elias J.E."/>
            <person name="Goswami T."/>
            <person name="Rad R."/>
            <person name="Beausoleil S.A."/>
            <person name="Villen J."/>
            <person name="Haas W."/>
            <person name="Sowa M.E."/>
            <person name="Gygi S.P."/>
        </authorList>
    </citation>
    <scope>PHOSPHORYLATION [LARGE SCALE ANALYSIS] AT SER-9; SER-39; SER-427; SER-432; SER-434; SER-437; SER-438; SER-664; SER-666 AND SER-684</scope>
    <scope>IDENTIFICATION BY MASS SPECTROMETRY [LARGE SCALE ANALYSIS]</scope>
    <source>
        <tissue>Brain</tissue>
        <tissue>Brown adipose tissue</tissue>
    </source>
</reference>
<reference key="12">
    <citation type="journal article" date="2014" name="Mol. Cell. Proteomics">
        <title>Immunoaffinity enrichment and mass spectrometry analysis of protein methylation.</title>
        <authorList>
            <person name="Guo A."/>
            <person name="Gu H."/>
            <person name="Zhou J."/>
            <person name="Mulhern D."/>
            <person name="Wang Y."/>
            <person name="Lee K.A."/>
            <person name="Yang V."/>
            <person name="Aguiar M."/>
            <person name="Kornhauser J."/>
            <person name="Jia X."/>
            <person name="Ren J."/>
            <person name="Beausoleil S.A."/>
            <person name="Silva J.C."/>
            <person name="Vemulapalli V."/>
            <person name="Bedford M.T."/>
            <person name="Comb M.J."/>
        </authorList>
    </citation>
    <scope>METHYLATION [LARGE SCALE ANALYSIS] AT ARG-430; ARG-476; ARG-534; ARG-547; ARG-556; ARG-622 AND ARG-680</scope>
    <scope>IDENTIFICATION BY MASS SPECTROMETRY [LARGE SCALE ANALYSIS]</scope>
    <source>
        <tissue>Brain</tissue>
        <tissue>Embryo</tissue>
    </source>
</reference>
<evidence type="ECO:0000250" key="1"/>
<evidence type="ECO:0000250" key="2">
    <source>
        <dbReference type="UniProtKB" id="P09951"/>
    </source>
</evidence>
<evidence type="ECO:0000250" key="3">
    <source>
        <dbReference type="UniProtKB" id="P17599"/>
    </source>
</evidence>
<evidence type="ECO:0000250" key="4">
    <source>
        <dbReference type="UniProtKB" id="P17600"/>
    </source>
</evidence>
<evidence type="ECO:0000256" key="5">
    <source>
        <dbReference type="SAM" id="MobiDB-lite"/>
    </source>
</evidence>
<evidence type="ECO:0000269" key="6">
    <source>
    </source>
</evidence>
<evidence type="ECO:0000269" key="7">
    <source>
    </source>
</evidence>
<evidence type="ECO:0000269" key="8">
    <source>
    </source>
</evidence>
<evidence type="ECO:0000303" key="9">
    <source>
    </source>
</evidence>
<evidence type="ECO:0000303" key="10">
    <source>
    </source>
</evidence>
<evidence type="ECO:0000305" key="11"/>
<evidence type="ECO:0007744" key="12">
    <source>
    </source>
</evidence>
<evidence type="ECO:0007744" key="13">
    <source>
    </source>
</evidence>
<evidence type="ECO:0007744" key="14">
    <source>
    </source>
</evidence>
<evidence type="ECO:0007744" key="15">
    <source>
    </source>
</evidence>